<name>RL6_PROMT</name>
<comment type="function">
    <text evidence="1">This protein binds to the 23S rRNA, and is important in its secondary structure. It is located near the subunit interface in the base of the L7/L12 stalk, and near the tRNA binding site of the peptidyltransferase center.</text>
</comment>
<comment type="subunit">
    <text evidence="1">Part of the 50S ribosomal subunit.</text>
</comment>
<comment type="similarity">
    <text evidence="1">Belongs to the universal ribosomal protein uL6 family.</text>
</comment>
<reference key="1">
    <citation type="journal article" date="2007" name="PLoS Genet.">
        <title>Patterns and implications of gene gain and loss in the evolution of Prochlorococcus.</title>
        <authorList>
            <person name="Kettler G.C."/>
            <person name="Martiny A.C."/>
            <person name="Huang K."/>
            <person name="Zucker J."/>
            <person name="Coleman M.L."/>
            <person name="Rodrigue S."/>
            <person name="Chen F."/>
            <person name="Lapidus A."/>
            <person name="Ferriera S."/>
            <person name="Johnson J."/>
            <person name="Steglich C."/>
            <person name="Church G.M."/>
            <person name="Richardson P."/>
            <person name="Chisholm S.W."/>
        </authorList>
    </citation>
    <scope>NUCLEOTIDE SEQUENCE [LARGE SCALE GENOMIC DNA]</scope>
    <source>
        <strain>NATL2A</strain>
    </source>
</reference>
<organism>
    <name type="scientific">Prochlorococcus marinus (strain NATL2A)</name>
    <dbReference type="NCBI Taxonomy" id="59920"/>
    <lineage>
        <taxon>Bacteria</taxon>
        <taxon>Bacillati</taxon>
        <taxon>Cyanobacteriota</taxon>
        <taxon>Cyanophyceae</taxon>
        <taxon>Synechococcales</taxon>
        <taxon>Prochlorococcaceae</taxon>
        <taxon>Prochlorococcus</taxon>
    </lineage>
</organism>
<evidence type="ECO:0000255" key="1">
    <source>
        <dbReference type="HAMAP-Rule" id="MF_01365"/>
    </source>
</evidence>
<evidence type="ECO:0000305" key="2"/>
<dbReference type="EMBL" id="CP000095">
    <property type="protein sequence ID" value="AAZ58605.1"/>
    <property type="molecule type" value="Genomic_DNA"/>
</dbReference>
<dbReference type="RefSeq" id="WP_011295459.1">
    <property type="nucleotide sequence ID" value="NC_007335.2"/>
</dbReference>
<dbReference type="SMR" id="Q46IS3"/>
<dbReference type="STRING" id="59920.PMN2A_1115"/>
<dbReference type="KEGG" id="pmn:PMN2A_1115"/>
<dbReference type="HOGENOM" id="CLU_065464_1_2_3"/>
<dbReference type="OrthoDB" id="9805007at2"/>
<dbReference type="PhylomeDB" id="Q46IS3"/>
<dbReference type="Proteomes" id="UP000002535">
    <property type="component" value="Chromosome"/>
</dbReference>
<dbReference type="GO" id="GO:0022625">
    <property type="term" value="C:cytosolic large ribosomal subunit"/>
    <property type="evidence" value="ECO:0007669"/>
    <property type="project" value="TreeGrafter"/>
</dbReference>
<dbReference type="GO" id="GO:0019843">
    <property type="term" value="F:rRNA binding"/>
    <property type="evidence" value="ECO:0007669"/>
    <property type="project" value="UniProtKB-UniRule"/>
</dbReference>
<dbReference type="GO" id="GO:0003735">
    <property type="term" value="F:structural constituent of ribosome"/>
    <property type="evidence" value="ECO:0007669"/>
    <property type="project" value="InterPro"/>
</dbReference>
<dbReference type="GO" id="GO:0002181">
    <property type="term" value="P:cytoplasmic translation"/>
    <property type="evidence" value="ECO:0007669"/>
    <property type="project" value="TreeGrafter"/>
</dbReference>
<dbReference type="FunFam" id="3.90.930.12:FF:000001">
    <property type="entry name" value="50S ribosomal protein L6"/>
    <property type="match status" value="1"/>
</dbReference>
<dbReference type="FunFam" id="3.90.930.12:FF:000002">
    <property type="entry name" value="50S ribosomal protein L6"/>
    <property type="match status" value="1"/>
</dbReference>
<dbReference type="Gene3D" id="3.90.930.12">
    <property type="entry name" value="Ribosomal protein L6, alpha-beta domain"/>
    <property type="match status" value="2"/>
</dbReference>
<dbReference type="HAMAP" id="MF_01365_B">
    <property type="entry name" value="Ribosomal_uL6_B"/>
    <property type="match status" value="1"/>
</dbReference>
<dbReference type="InterPro" id="IPR000702">
    <property type="entry name" value="Ribosomal_uL6-like"/>
</dbReference>
<dbReference type="InterPro" id="IPR036789">
    <property type="entry name" value="Ribosomal_uL6-like_a/b-dom_sf"/>
</dbReference>
<dbReference type="InterPro" id="IPR020040">
    <property type="entry name" value="Ribosomal_uL6_a/b-dom"/>
</dbReference>
<dbReference type="InterPro" id="IPR019906">
    <property type="entry name" value="Ribosomal_uL6_bac-type"/>
</dbReference>
<dbReference type="InterPro" id="IPR002358">
    <property type="entry name" value="Ribosomal_uL6_CS"/>
</dbReference>
<dbReference type="NCBIfam" id="TIGR03654">
    <property type="entry name" value="L6_bact"/>
    <property type="match status" value="1"/>
</dbReference>
<dbReference type="PANTHER" id="PTHR11655">
    <property type="entry name" value="60S/50S RIBOSOMAL PROTEIN L6/L9"/>
    <property type="match status" value="1"/>
</dbReference>
<dbReference type="PANTHER" id="PTHR11655:SF14">
    <property type="entry name" value="LARGE RIBOSOMAL SUBUNIT PROTEIN UL6M"/>
    <property type="match status" value="1"/>
</dbReference>
<dbReference type="Pfam" id="PF00347">
    <property type="entry name" value="Ribosomal_L6"/>
    <property type="match status" value="2"/>
</dbReference>
<dbReference type="PIRSF" id="PIRSF002162">
    <property type="entry name" value="Ribosomal_L6"/>
    <property type="match status" value="1"/>
</dbReference>
<dbReference type="PRINTS" id="PR00059">
    <property type="entry name" value="RIBOSOMALL6"/>
</dbReference>
<dbReference type="SUPFAM" id="SSF56053">
    <property type="entry name" value="Ribosomal protein L6"/>
    <property type="match status" value="2"/>
</dbReference>
<dbReference type="PROSITE" id="PS00525">
    <property type="entry name" value="RIBOSOMAL_L6_1"/>
    <property type="match status" value="1"/>
</dbReference>
<feature type="chain" id="PRO_0000260914" description="Large ribosomal subunit protein uL6">
    <location>
        <begin position="1"/>
        <end position="179"/>
    </location>
</feature>
<sequence length="179" mass="19406">MSRTGKKPISLPEKVDVKFEGLSITVKGPKGELKRTLPNGVSLSKDENFIFVKPINEKRQSREMHGLCRSLVANMVEGVSNGFTKKLEIVGVGSRAQVKGKTLVVSAGYSHPVEVVPPEGITFKVENNTNVIVTGPDKELVGNEAAKIRAIRPPEPYKGKGIKYQGELIIRKAGKSGKT</sequence>
<gene>
    <name evidence="1" type="primary">rplF</name>
    <name evidence="1" type="synonym">rpl6</name>
    <name type="ordered locus">PMN2A_1115</name>
</gene>
<accession>Q46IS3</accession>
<protein>
    <recommendedName>
        <fullName evidence="1">Large ribosomal subunit protein uL6</fullName>
    </recommendedName>
    <alternativeName>
        <fullName evidence="2">50S ribosomal protein L6</fullName>
    </alternativeName>
</protein>
<keyword id="KW-1185">Reference proteome</keyword>
<keyword id="KW-0687">Ribonucleoprotein</keyword>
<keyword id="KW-0689">Ribosomal protein</keyword>
<keyword id="KW-0694">RNA-binding</keyword>
<keyword id="KW-0699">rRNA-binding</keyword>
<proteinExistence type="inferred from homology"/>